<accession>Q5ZXU1</accession>
<feature type="chain" id="PRO_1000012629" description="ATP-dependent protease subunit HslV">
    <location>
        <begin position="1"/>
        <end position="182"/>
    </location>
</feature>
<feature type="active site" evidence="1">
    <location>
        <position position="7"/>
    </location>
</feature>
<feature type="binding site" evidence="1">
    <location>
        <position position="162"/>
    </location>
    <ligand>
        <name>Na(+)</name>
        <dbReference type="ChEBI" id="CHEBI:29101"/>
    </ligand>
</feature>
<feature type="binding site" evidence="1">
    <location>
        <position position="165"/>
    </location>
    <ligand>
        <name>Na(+)</name>
        <dbReference type="ChEBI" id="CHEBI:29101"/>
    </ligand>
</feature>
<feature type="binding site" evidence="1">
    <location>
        <position position="168"/>
    </location>
    <ligand>
        <name>Na(+)</name>
        <dbReference type="ChEBI" id="CHEBI:29101"/>
    </ligand>
</feature>
<evidence type="ECO:0000255" key="1">
    <source>
        <dbReference type="HAMAP-Rule" id="MF_00248"/>
    </source>
</evidence>
<organism>
    <name type="scientific">Legionella pneumophila subsp. pneumophila (strain Philadelphia 1 / ATCC 33152 / DSM 7513)</name>
    <dbReference type="NCBI Taxonomy" id="272624"/>
    <lineage>
        <taxon>Bacteria</taxon>
        <taxon>Pseudomonadati</taxon>
        <taxon>Pseudomonadota</taxon>
        <taxon>Gammaproteobacteria</taxon>
        <taxon>Legionellales</taxon>
        <taxon>Legionellaceae</taxon>
        <taxon>Legionella</taxon>
    </lineage>
</organism>
<gene>
    <name evidence="1" type="primary">hslV</name>
    <name type="ordered locus">lpg0640</name>
</gene>
<protein>
    <recommendedName>
        <fullName evidence="1">ATP-dependent protease subunit HslV</fullName>
        <ecNumber evidence="1">3.4.25.2</ecNumber>
    </recommendedName>
</protein>
<reference key="1">
    <citation type="journal article" date="2004" name="Science">
        <title>The genomic sequence of the accidental pathogen Legionella pneumophila.</title>
        <authorList>
            <person name="Chien M."/>
            <person name="Morozova I."/>
            <person name="Shi S."/>
            <person name="Sheng H."/>
            <person name="Chen J."/>
            <person name="Gomez S.M."/>
            <person name="Asamani G."/>
            <person name="Hill K."/>
            <person name="Nuara J."/>
            <person name="Feder M."/>
            <person name="Rineer J."/>
            <person name="Greenberg J.J."/>
            <person name="Steshenko V."/>
            <person name="Park S.H."/>
            <person name="Zhao B."/>
            <person name="Teplitskaya E."/>
            <person name="Edwards J.R."/>
            <person name="Pampou S."/>
            <person name="Georghiou A."/>
            <person name="Chou I.-C."/>
            <person name="Iannuccilli W."/>
            <person name="Ulz M.E."/>
            <person name="Kim D.H."/>
            <person name="Geringer-Sameth A."/>
            <person name="Goldsberry C."/>
            <person name="Morozov P."/>
            <person name="Fischer S.G."/>
            <person name="Segal G."/>
            <person name="Qu X."/>
            <person name="Rzhetsky A."/>
            <person name="Zhang P."/>
            <person name="Cayanis E."/>
            <person name="De Jong P.J."/>
            <person name="Ju J."/>
            <person name="Kalachikov S."/>
            <person name="Shuman H.A."/>
            <person name="Russo J.J."/>
        </authorList>
    </citation>
    <scope>NUCLEOTIDE SEQUENCE [LARGE SCALE GENOMIC DNA]</scope>
    <source>
        <strain>Philadelphia 1 / ATCC 33152 / DSM 7513</strain>
    </source>
</reference>
<keyword id="KW-0021">Allosteric enzyme</keyword>
<keyword id="KW-0963">Cytoplasm</keyword>
<keyword id="KW-0378">Hydrolase</keyword>
<keyword id="KW-0479">Metal-binding</keyword>
<keyword id="KW-0645">Protease</keyword>
<keyword id="KW-1185">Reference proteome</keyword>
<keyword id="KW-0915">Sodium</keyword>
<keyword id="KW-0346">Stress response</keyword>
<keyword id="KW-0888">Threonine protease</keyword>
<proteinExistence type="inferred from homology"/>
<comment type="function">
    <text evidence="1">Protease subunit of a proteasome-like degradation complex believed to be a general protein degrading machinery.</text>
</comment>
<comment type="catalytic activity">
    <reaction evidence="1">
        <text>ATP-dependent cleavage of peptide bonds with broad specificity.</text>
        <dbReference type="EC" id="3.4.25.2"/>
    </reaction>
</comment>
<comment type="activity regulation">
    <text evidence="1">Allosterically activated by HslU binding.</text>
</comment>
<comment type="subunit">
    <text evidence="1">A double ring-shaped homohexamer of HslV is capped on each side by a ring-shaped HslU homohexamer. The assembly of the HslU/HslV complex is dependent on binding of ATP.</text>
</comment>
<comment type="subcellular location">
    <subcellularLocation>
        <location evidence="1">Cytoplasm</location>
    </subcellularLocation>
</comment>
<comment type="similarity">
    <text evidence="1">Belongs to the peptidase T1B family. HslV subfamily.</text>
</comment>
<name>HSLV_LEGPH</name>
<dbReference type="EC" id="3.4.25.2" evidence="1"/>
<dbReference type="EMBL" id="AE017354">
    <property type="protein sequence ID" value="AAU26729.1"/>
    <property type="molecule type" value="Genomic_DNA"/>
</dbReference>
<dbReference type="RefSeq" id="WP_010946377.1">
    <property type="nucleotide sequence ID" value="NC_002942.5"/>
</dbReference>
<dbReference type="RefSeq" id="YP_094676.1">
    <property type="nucleotide sequence ID" value="NC_002942.5"/>
</dbReference>
<dbReference type="SMR" id="Q5ZXU1"/>
<dbReference type="STRING" id="272624.lpg0640"/>
<dbReference type="MEROPS" id="T01.006"/>
<dbReference type="PaxDb" id="272624-lpg0640"/>
<dbReference type="GeneID" id="57034635"/>
<dbReference type="KEGG" id="lpn:lpg0640"/>
<dbReference type="PATRIC" id="fig|272624.6.peg.658"/>
<dbReference type="eggNOG" id="COG5405">
    <property type="taxonomic scope" value="Bacteria"/>
</dbReference>
<dbReference type="HOGENOM" id="CLU_093872_1_0_6"/>
<dbReference type="OrthoDB" id="9804884at2"/>
<dbReference type="Proteomes" id="UP000000609">
    <property type="component" value="Chromosome"/>
</dbReference>
<dbReference type="GO" id="GO:0009376">
    <property type="term" value="C:HslUV protease complex"/>
    <property type="evidence" value="ECO:0007669"/>
    <property type="project" value="UniProtKB-UniRule"/>
</dbReference>
<dbReference type="GO" id="GO:0005839">
    <property type="term" value="C:proteasome core complex"/>
    <property type="evidence" value="ECO:0007669"/>
    <property type="project" value="InterPro"/>
</dbReference>
<dbReference type="GO" id="GO:0046872">
    <property type="term" value="F:metal ion binding"/>
    <property type="evidence" value="ECO:0007669"/>
    <property type="project" value="UniProtKB-KW"/>
</dbReference>
<dbReference type="GO" id="GO:0004298">
    <property type="term" value="F:threonine-type endopeptidase activity"/>
    <property type="evidence" value="ECO:0007669"/>
    <property type="project" value="UniProtKB-KW"/>
</dbReference>
<dbReference type="GO" id="GO:0051603">
    <property type="term" value="P:proteolysis involved in protein catabolic process"/>
    <property type="evidence" value="ECO:0007669"/>
    <property type="project" value="InterPro"/>
</dbReference>
<dbReference type="CDD" id="cd01913">
    <property type="entry name" value="protease_HslV"/>
    <property type="match status" value="1"/>
</dbReference>
<dbReference type="FunFam" id="3.60.20.10:FF:000002">
    <property type="entry name" value="ATP-dependent protease subunit HslV"/>
    <property type="match status" value="1"/>
</dbReference>
<dbReference type="Gene3D" id="3.60.20.10">
    <property type="entry name" value="Glutamine Phosphoribosylpyrophosphate, subunit 1, domain 1"/>
    <property type="match status" value="1"/>
</dbReference>
<dbReference type="HAMAP" id="MF_00248">
    <property type="entry name" value="HslV"/>
    <property type="match status" value="1"/>
</dbReference>
<dbReference type="InterPro" id="IPR022281">
    <property type="entry name" value="ATP-dep_Prtase_HsIV_su"/>
</dbReference>
<dbReference type="InterPro" id="IPR029055">
    <property type="entry name" value="Ntn_hydrolases_N"/>
</dbReference>
<dbReference type="InterPro" id="IPR001353">
    <property type="entry name" value="Proteasome_sua/b"/>
</dbReference>
<dbReference type="InterPro" id="IPR023333">
    <property type="entry name" value="Proteasome_suB-type"/>
</dbReference>
<dbReference type="NCBIfam" id="TIGR03692">
    <property type="entry name" value="ATP_dep_HslV"/>
    <property type="match status" value="1"/>
</dbReference>
<dbReference type="NCBIfam" id="NF003964">
    <property type="entry name" value="PRK05456.1"/>
    <property type="match status" value="1"/>
</dbReference>
<dbReference type="PANTHER" id="PTHR32194:SF0">
    <property type="entry name" value="ATP-DEPENDENT PROTEASE SUBUNIT HSLV"/>
    <property type="match status" value="1"/>
</dbReference>
<dbReference type="PANTHER" id="PTHR32194">
    <property type="entry name" value="METALLOPROTEASE TLDD"/>
    <property type="match status" value="1"/>
</dbReference>
<dbReference type="Pfam" id="PF00227">
    <property type="entry name" value="Proteasome"/>
    <property type="match status" value="1"/>
</dbReference>
<dbReference type="PIRSF" id="PIRSF039093">
    <property type="entry name" value="HslV"/>
    <property type="match status" value="1"/>
</dbReference>
<dbReference type="SUPFAM" id="SSF56235">
    <property type="entry name" value="N-terminal nucleophile aminohydrolases (Ntn hydrolases)"/>
    <property type="match status" value="1"/>
</dbReference>
<dbReference type="PROSITE" id="PS51476">
    <property type="entry name" value="PROTEASOME_BETA_2"/>
    <property type="match status" value="1"/>
</dbReference>
<sequence length="182" mass="19708">MEQFHGTTILSVRRGNQVVIGGDGQVTLGNTVMKGNARKVRRLYKDKVIAGFAGGTADAFTLFERFEAKLEMHQGHLIRAAVELAKDWRTDRILRRLEAVLAVADSKASLIITGNGDVIEPEESLIAIGSGGPFAQAAARALMENTQLSAKEIVQKALTIAGDICIYTNNNLTIEELNDEGK</sequence>